<sequence length="566" mass="65806">MLNAYKHSGKAELKPVISKIIAEIPEIRRHVREVIDIVRETINEVNQLPIEKQKEIIEKNWPELLEEKPRTEEKSLPPLPNAAKGRVVTRFAPNPDYTIHLGNARPALLSYWYAEMYEGKMILRFEDTDPRTKAPFPEAYDRIRNDLKWLGIKWNEEYIQSLRLPILYNALRELIKHGGAYVDKCSPKEFKKLRDSGKPCPHRELPPEKHLEELDRIFEGYYSEGEAVVRVKTDLSHPDPSVRDWVAARIIDTSKTPHPIVGDKYILWPTYNLAAAIDDHLMGVTHILRAKEHVSNTIKQKFLYDHMGWKYPETIHFGRLSLEGVILSKSRMRKMIVEYNMEPYDDPRFGTLSGLRRRGIVRETLWRIIKDVGINVIDARISYVNLAAINRSIIDPQAKRYMAIEEALPLKLIGFNNSIEAHVLRHPSTRETYNYIIKPGDIVYISQKDFNIIQNKMFRLMGIGNFALTRPVFSKNYIGFEARLISLSAKEAKQYRAPIIQWVKLEQSIRVKLIIPKETNLETRILLAEKALTNEELGNIVQFYRIGFARIDSKEPEEIKCIFAHE</sequence>
<accession>A3DMR5</accession>
<protein>
    <recommendedName>
        <fullName evidence="1">Glutamate--tRNA ligase</fullName>
        <ecNumber evidence="1">6.1.1.17</ecNumber>
    </recommendedName>
    <alternativeName>
        <fullName evidence="1">Glutamyl-tRNA synthetase</fullName>
        <shortName evidence="1">GluRS</shortName>
    </alternativeName>
</protein>
<feature type="chain" id="PRO_0000367805" description="Glutamate--tRNA ligase">
    <location>
        <begin position="1"/>
        <end position="566"/>
    </location>
</feature>
<feature type="short sequence motif" description="'HIGH' region" evidence="1">
    <location>
        <begin position="93"/>
        <end position="103"/>
    </location>
</feature>
<name>SYE_STAMF</name>
<comment type="function">
    <text evidence="1">Catalyzes the attachment of glutamate to tRNA(Glu) in a two-step reaction: glutamate is first activated by ATP to form Glu-AMP and then transferred to the acceptor end of tRNA(Glu).</text>
</comment>
<comment type="catalytic activity">
    <reaction evidence="1">
        <text>tRNA(Glu) + L-glutamate + ATP = L-glutamyl-tRNA(Glu) + AMP + diphosphate</text>
        <dbReference type="Rhea" id="RHEA:23540"/>
        <dbReference type="Rhea" id="RHEA-COMP:9663"/>
        <dbReference type="Rhea" id="RHEA-COMP:9680"/>
        <dbReference type="ChEBI" id="CHEBI:29985"/>
        <dbReference type="ChEBI" id="CHEBI:30616"/>
        <dbReference type="ChEBI" id="CHEBI:33019"/>
        <dbReference type="ChEBI" id="CHEBI:78442"/>
        <dbReference type="ChEBI" id="CHEBI:78520"/>
        <dbReference type="ChEBI" id="CHEBI:456215"/>
        <dbReference type="EC" id="6.1.1.17"/>
    </reaction>
</comment>
<comment type="subcellular location">
    <subcellularLocation>
        <location evidence="1">Cytoplasm</location>
    </subcellularLocation>
</comment>
<comment type="similarity">
    <text evidence="1">Belongs to the class-I aminoacyl-tRNA synthetase family. Glutamate--tRNA ligase type 2 subfamily.</text>
</comment>
<organism>
    <name type="scientific">Staphylothermus marinus (strain ATCC 43588 / DSM 3639 / JCM 9404 / F1)</name>
    <dbReference type="NCBI Taxonomy" id="399550"/>
    <lineage>
        <taxon>Archaea</taxon>
        <taxon>Thermoproteota</taxon>
        <taxon>Thermoprotei</taxon>
        <taxon>Desulfurococcales</taxon>
        <taxon>Desulfurococcaceae</taxon>
        <taxon>Staphylothermus</taxon>
    </lineage>
</organism>
<dbReference type="EC" id="6.1.1.17" evidence="1"/>
<dbReference type="EMBL" id="CP000575">
    <property type="protein sequence ID" value="ABN69925.1"/>
    <property type="molecule type" value="Genomic_DNA"/>
</dbReference>
<dbReference type="SMR" id="A3DMR5"/>
<dbReference type="STRING" id="399550.Smar_0824"/>
<dbReference type="KEGG" id="smr:Smar_0824"/>
<dbReference type="eggNOG" id="arCOG04302">
    <property type="taxonomic scope" value="Archaea"/>
</dbReference>
<dbReference type="HOGENOM" id="CLU_001882_1_3_2"/>
<dbReference type="Proteomes" id="UP000000254">
    <property type="component" value="Chromosome"/>
</dbReference>
<dbReference type="GO" id="GO:0005829">
    <property type="term" value="C:cytosol"/>
    <property type="evidence" value="ECO:0007669"/>
    <property type="project" value="TreeGrafter"/>
</dbReference>
<dbReference type="GO" id="GO:0005524">
    <property type="term" value="F:ATP binding"/>
    <property type="evidence" value="ECO:0007669"/>
    <property type="project" value="UniProtKB-UniRule"/>
</dbReference>
<dbReference type="GO" id="GO:0004818">
    <property type="term" value="F:glutamate-tRNA ligase activity"/>
    <property type="evidence" value="ECO:0007669"/>
    <property type="project" value="UniProtKB-UniRule"/>
</dbReference>
<dbReference type="GO" id="GO:0043604">
    <property type="term" value="P:amide biosynthetic process"/>
    <property type="evidence" value="ECO:0007669"/>
    <property type="project" value="TreeGrafter"/>
</dbReference>
<dbReference type="GO" id="GO:0006424">
    <property type="term" value="P:glutamyl-tRNA aminoacylation"/>
    <property type="evidence" value="ECO:0007669"/>
    <property type="project" value="UniProtKB-UniRule"/>
</dbReference>
<dbReference type="Gene3D" id="2.40.240.100">
    <property type="match status" value="1"/>
</dbReference>
<dbReference type="Gene3D" id="3.40.50.620">
    <property type="entry name" value="HUPs"/>
    <property type="match status" value="1"/>
</dbReference>
<dbReference type="Gene3D" id="2.40.240.10">
    <property type="entry name" value="Ribosomal Protein L25, Chain P"/>
    <property type="match status" value="1"/>
</dbReference>
<dbReference type="HAMAP" id="MF_02076">
    <property type="entry name" value="Glu_tRNA_synth_type2"/>
    <property type="match status" value="1"/>
</dbReference>
<dbReference type="InterPro" id="IPR050132">
    <property type="entry name" value="Gln/Glu-tRNA_Ligase"/>
</dbReference>
<dbReference type="InterPro" id="IPR004526">
    <property type="entry name" value="Glu-tRNA-synth_arc/euk"/>
</dbReference>
<dbReference type="InterPro" id="IPR000924">
    <property type="entry name" value="Glu/Gln-tRNA-synth"/>
</dbReference>
<dbReference type="InterPro" id="IPR020058">
    <property type="entry name" value="Glu/Gln-tRNA-synth_Ib_cat-dom"/>
</dbReference>
<dbReference type="InterPro" id="IPR020059">
    <property type="entry name" value="Glu/Gln-tRNA-synth_Ib_codon-bd"/>
</dbReference>
<dbReference type="InterPro" id="IPR020056">
    <property type="entry name" value="Rbsml_bL25/Gln-tRNA_synth_N"/>
</dbReference>
<dbReference type="InterPro" id="IPR011035">
    <property type="entry name" value="Ribosomal_bL25/Gln-tRNA_synth"/>
</dbReference>
<dbReference type="InterPro" id="IPR014729">
    <property type="entry name" value="Rossmann-like_a/b/a_fold"/>
</dbReference>
<dbReference type="InterPro" id="IPR049437">
    <property type="entry name" value="tRNA-synt_1c_C2"/>
</dbReference>
<dbReference type="NCBIfam" id="TIGR00463">
    <property type="entry name" value="gltX_arch"/>
    <property type="match status" value="1"/>
</dbReference>
<dbReference type="NCBIfam" id="NF003169">
    <property type="entry name" value="PRK04156.1"/>
    <property type="match status" value="1"/>
</dbReference>
<dbReference type="PANTHER" id="PTHR43097:SF5">
    <property type="entry name" value="GLUTAMATE--TRNA LIGASE"/>
    <property type="match status" value="1"/>
</dbReference>
<dbReference type="PANTHER" id="PTHR43097">
    <property type="entry name" value="GLUTAMINE-TRNA LIGASE"/>
    <property type="match status" value="1"/>
</dbReference>
<dbReference type="Pfam" id="PF00749">
    <property type="entry name" value="tRNA-synt_1c"/>
    <property type="match status" value="1"/>
</dbReference>
<dbReference type="Pfam" id="PF03950">
    <property type="entry name" value="tRNA-synt_1c_C"/>
    <property type="match status" value="1"/>
</dbReference>
<dbReference type="Pfam" id="PF20974">
    <property type="entry name" value="tRNA-synt_1c_C2"/>
    <property type="match status" value="1"/>
</dbReference>
<dbReference type="PRINTS" id="PR00987">
    <property type="entry name" value="TRNASYNTHGLU"/>
</dbReference>
<dbReference type="SUPFAM" id="SSF52374">
    <property type="entry name" value="Nucleotidylyl transferase"/>
    <property type="match status" value="1"/>
</dbReference>
<dbReference type="SUPFAM" id="SSF50715">
    <property type="entry name" value="Ribosomal protein L25-like"/>
    <property type="match status" value="1"/>
</dbReference>
<keyword id="KW-0030">Aminoacyl-tRNA synthetase</keyword>
<keyword id="KW-0067">ATP-binding</keyword>
<keyword id="KW-0963">Cytoplasm</keyword>
<keyword id="KW-0436">Ligase</keyword>
<keyword id="KW-0547">Nucleotide-binding</keyword>
<keyword id="KW-0648">Protein biosynthesis</keyword>
<keyword id="KW-1185">Reference proteome</keyword>
<reference key="1">
    <citation type="journal article" date="2009" name="BMC Genomics">
        <title>The complete genome sequence of Staphylothermus marinus reveals differences in sulfur metabolism among heterotrophic Crenarchaeota.</title>
        <authorList>
            <person name="Anderson I.J."/>
            <person name="Dharmarajan L."/>
            <person name="Rodriguez J."/>
            <person name="Hooper S."/>
            <person name="Porat I."/>
            <person name="Ulrich L.E."/>
            <person name="Elkins J.G."/>
            <person name="Mavromatis K."/>
            <person name="Sun H."/>
            <person name="Land M."/>
            <person name="Lapidus A."/>
            <person name="Lucas S."/>
            <person name="Barry K."/>
            <person name="Huber H."/>
            <person name="Zhulin I.B."/>
            <person name="Whitman W.B."/>
            <person name="Mukhopadhyay B."/>
            <person name="Woese C."/>
            <person name="Bristow J."/>
            <person name="Kyrpides N."/>
        </authorList>
    </citation>
    <scope>NUCLEOTIDE SEQUENCE [LARGE SCALE GENOMIC DNA]</scope>
    <source>
        <strain>ATCC 43588 / DSM 3639 / JCM 9404 / F1</strain>
    </source>
</reference>
<reference key="2">
    <citation type="journal article" date="2009" name="Stand. Genomic Sci.">
        <title>Complete genome sequence of Staphylothermus marinus Stetter and Fiala 1986 type strain F1.</title>
        <authorList>
            <person name="Anderson I.J."/>
            <person name="Sun H."/>
            <person name="Lapidus A."/>
            <person name="Copeland A."/>
            <person name="Glavina Del Rio T."/>
            <person name="Tice H."/>
            <person name="Dalin E."/>
            <person name="Lucas S."/>
            <person name="Barry K."/>
            <person name="Land M."/>
            <person name="Richardson P."/>
            <person name="Huber H."/>
            <person name="Kyrpides N.C."/>
        </authorList>
    </citation>
    <scope>NUCLEOTIDE SEQUENCE [LARGE SCALE GENOMIC DNA]</scope>
    <source>
        <strain>ATCC 43588 / DSM 3639 / JCM 9404 / F1</strain>
    </source>
</reference>
<proteinExistence type="inferred from homology"/>
<gene>
    <name evidence="1" type="primary">gltX</name>
    <name type="ordered locus">Smar_0824</name>
</gene>
<evidence type="ECO:0000255" key="1">
    <source>
        <dbReference type="HAMAP-Rule" id="MF_02076"/>
    </source>
</evidence>